<protein>
    <recommendedName>
        <fullName evidence="7">Fumosorinone synthetase</fullName>
        <ecNumber evidence="9">2.3.1.-</ecNumber>
        <ecNumber evidence="9">6.3.2.-</ecNumber>
    </recommendedName>
    <alternativeName>
        <fullName evidence="7">Fumosorinone biosynthesis cluster protein B</fullName>
    </alternativeName>
    <alternativeName>
        <fullName evidence="7">Hybrid PKS-NRPS synthetase fumoS</fullName>
    </alternativeName>
</protein>
<accession>A0A167LUQ4</accession>
<accession>A0A0E3Y5V5</accession>
<proteinExistence type="inferred from homology"/>
<sequence length="4138" mass="445360">MSPTTQHEPGSPRVPEPIAIVGSACRFPGGSSSPSKLWDLLREPRDVLRELPPERLNLNRYYHPDGERHGSTNVANRAYVLDEDVARFDAGFFGISPLEAAGMDPQQRLLLEVVHEATEAAGIPLAQLRGSPTSVHVGVMTNDWSHLQRRDPETMPRHTATGAAASIIANRVSYVFDLRGASETIDTACSSSLVALHSAARALRAGDCTRAVVAGVNLILDPDPFVFEAKLGMLSPGSRSRMWDKEADGYARGEGVAAVVLKTLRDALRDGDEVAGVVRATGVNSDGTGGGGGLTMPSAEAQTALIRRTYEEAGLDPVADRPQFFECHGTGTKAGDPVEARAISEAFVKGHRGEEGVPTVKQPLYVGSIKTVVGHLEGCAGLAGVIKVLLSLKHGVIPPNLLFNELNPDIAQYYGPLNIPTKAKPWPKLAPGVPLRASVNSFGFGGTNAHAIIERYDATQSYVVALKAGIPHLSRPITHRDSSDVSIPAPILLSARTGGALWRTVDAYARHLRQHPELSLADLSRFLHERRSTHRVRAHFSGASREALLDSMDAFVRTHAADAKSAATQGRIGHAPLLIDPKETPGVLGVFTGQGAQWPAMGRDMMRASPLFRRTIAECEGVLRALPGDDAPEWSLAEELTKEAPASRLAEAAIAQPLCTAVQLALVGALRAAGLRFDAVVGHSSGEIAATYAAGIITLQGAMQIAYYRGFHAKLARGPAGEAGGMLAVGLSPAEARELCARPEFTGRLQVAACNAPKSVTLSGDKEVVAAAREMLVAQGAFARELRVDTAYHSHHMLPCAAPYLESIRKCDVQVSRPTPGTCQWSSSVRGDAELLRADRSLEDLKGPYWVANMVQTVQFSRALEASIWHGGPFDLAVEVGPHPALKGPTEQTLKGVYGSVPFYTGVLKRDAPDAVSFSTAIGSVWAHLGPDFVDVPGYCRSVFSETGHDQEGPVTFVPDLPAYAWDHEETHWRESRISKRYRTGRDGYHELLGRRAVDDNEREVRWRNLLAVRDLPWTRGHTILGEVLLPGAAYVSMALEAGRRLAEDRGREARLLEVSEVDILRPVVVADGKDATETLFTVRILKEDLSTDYKSGGGLIKASFSFCVYSSASSTAIAHTCEGLIDVHLGPRLGSESEDEGSVPQLPQRQAPAPNLQEIDCEKLYAQFGTIGLEYSGIFRRMTSSRRHLGHATASASWAAADLGDAYMVHPAVLDVAFQTIFVAHAHPDSGQVNAALLPSRIERVRVAPSPAMQRIDGILSAEVDSWILHQTATSVTGNLDVHDADTGAPLLQVEGFEVRSVGERDAAADRLIFAETAWGPDVSVAGGLSDPIRDEAADATVKGLAEASERVSLFYARRLMAELSAEDRARASWYHERLLQALDHHLERLKGGVHPHLRAEWLADDDEVVRAIDAAFPKTVELQMLHAVGRNMASVVRGEKHMLEVMRVDNMLDRFYAEDKGMQQVNIFLANAVKEISFKFPRCKILEIGAGTGATTSAVLHALDDAFDTYTYTDLSVGFFETAMERFADSRHKMVFAALDVEKDLASQPGFAPHSYDLIIAANVLHATRDMAVTLRNVRALLRPGGYLVLNEHTGAGSLCATFNFGGLEGWWLAEEEDRRRSPLLSTARWDAQLRRAGFSGADHVAHDIPEGGEGGRQISLIVSQAVDERFWARVSPLSEMAELQEQEEEEMPLLLIGGKMTATARIFKEVRKLLPRRWRERVRLVDCVDSLDVEALPARCDVICLQELDAALFATPMTPRRLQILQTLLMNTANLLWVTHAQTSGSATPRAAMFRGITRVMAGEIPQINTQVIGVEPATVPSSTARHLLEAFLRLQSEHTRIATNSDGDDAQQSALWSHEPEIDILPDGTVMIPRVRLNRSLNETYNASSRTVAKTVDASCVPVQAVAGPTKMQLQPADEQTSLANGTDSTVRVKVEFTLHVPQAPDGTNLYLVCGWTLPTEAPDGTPNAVLAVSTVNASIIEVPSASAAVVADDDMQPDLLLRIFDHLAAQAVQVQLNPTGEHKARALIYGADERLAQLISTQSTFRDNKVYFASSQRWVPDDWIKVHPLSSKFALSQALPYGVQVFIDCLGTGESVDGRKMIVSCLPAARRVRRLDASLLLELPQFSAALASAYSHAKSVTCPDAGEPSRVDRFHATELAGRPSNSFASSVYITSWQDLGAVQVATPPLETQGMFRSDRTYLMVGAAGGVGTSICRWMVRNGARHVVVTSRTPTADPVMLAEAAHHGADVRVLPMDVCDRLAVHALVDTIRATMPPIAGVCNAAMVLRDKLFLDMDVDILNDTLGPKVDGTETLDALFSDDAALDFFVLLGSAATVASNAGQANYHCANLYMDALVRRRRARGLAASIIHVGFVCETGYVARLVDEARALTQRDAMRVTTLSETDVHHAFAQAVRGGRPGRSGGSHSIVMGIEPPSKALEAGRSLEAVRRKALWLSDPRFGHMVPYSTAASQTAVEQSAAADASAGGGSVGQQVAEASTEEEAAAAVRRAFSAKLEGILLLPPSSIGEDGAGRPVTDLGIDSLVAVEIRTWFLKQLRVDVPVMKILGGSTIGQLSTLAAKLARQQSPRKEGQMAGKEQGLPSPETQDKLVDDKEQKVQVTSSLAKADSLTQEMQASAHSHSDSATNPTPSSTASEADDSNSQSTRSTSTEPKTEDKVSAHVQLEPATADHHPKILREAPMSAAQARIWFLAEHMAEPDAYNMVFHYRVRGPLHLARLRRALHAVAAHHECLRMSFRADPHTGQPMQGLLACSAFQMTIRDEGDVEEELRRLRTRAWRLELGETLEIVALPGGELLFGYHHIVMDGIGWAVVLADLDRAYRMLPLDKAAAGSHVEFSEAQRQQEREGALDEPLAFWQAEFETIPEPLPQLSVSSPQRSVAAAGTHRVLRELPPARGAAIRAAGRQLRVSPFHLHLAVLQVVLARLAGIEDVCVGIVDANRGDARAARMVGCFVNMLPVRNQVRPGASLAEVARGAASKALAAFANGAAPLDRILDRVQAPRPVGGTPLFQAALNYRPASALMHEAPLGAECRMELVPGDIKDADNPFEVSVLLSELPGGGLGVEMFCQKAVYNIDGSEALLDAYVNVLGDFMTDASQRVRECAVYRQADVDEALTLGKGPEIKFGWPATLSERVMNICQKNSARTAIKDGSMTLSYASLASKVNDVASAIVSAGSGVGSRIAVLCEPSVDAIVAMLAILHIGAVYVPLDISLPEARHVALVSNCTPSLIVCHKATLERTHRLSTPGYESAQELVIDDLPPSSKQIDSAPLRAQPDAPAILLYTSGTTGTPKGVLLTQANFANHIALKSAHLGLDRDEVILQQSSLGFDMSLVQIFCALGNGGCLVIVPPDARRDPVELTSIVQQHEVSLTIATPSEYLAWLQYGSGCLAQATAWRHLCMGGEPISQLLKDELRRLGRKNLKVTNCYGPTETTAAVSFQLIDLESDSCSSQLGSEVSRYAVGKPLANYSIRIMDPVGAWLPVNHTGEIVTGGAGVALGYLGLSEETRAKFVQVDGEPGRFYRTGDTGRLLPDGTLLCFGRIEGDSQVKLRGLRIELQEVEAAILQASEGLLQAAGVSCRGDMLVAHCTLSPGKESTETDKTALLRRLSEVLPQFAVPAAIHIVPSLPNNSNGKLDRKAIAALPLPTSDCAAHASSSEKMTIQEGELRLLWERVLPRDAAGSRITPASDFFLRGGNSLLLMKLQAAIRDAMDVRVPTRALYQASTLSGMTRCVLAQRERQRRDEPPAEDIDWAAEVAVPPELLARADELNSSAAAASLRPRKTTGGLEILLTGATGFLGGQLLRHLLRSPAVSRIHCVAVPADEREHLEAGSEANGSSGKVACHTGNLAAADLGLAAAQRARLAQSVDVIVHAGAAGHCLNTYATLSAPNLSSTKSLAALALARSPPIPLFFASSNRVVLLTGETAPASPSSVASSLPPADGAQGYTASKWASEVFLESLTNAVTSPWRVSIHRPCALVGDGVPNTDALNVILRYAVEMRCVPSLPRERARGYLDFGTVDAVVAEMAADVLALADEEEGGAGVRYRHHSGGVKVPIHEFRAHMDKKYGERFESVDLAAWIPRAVEAGMDPLISAYLETFLETDEPLIFPYMGGKSD</sequence>
<feature type="chain" id="PRO_0000451336" description="Fumosorinone synthetase">
    <location>
        <begin position="1"/>
        <end position="4138"/>
    </location>
</feature>
<feature type="domain" description="Ketosynthase family 3 (KS3)" evidence="3 9">
    <location>
        <begin position="15"/>
        <end position="455"/>
    </location>
</feature>
<feature type="domain" description="PKS/mFAS DH" evidence="4">
    <location>
        <begin position="990"/>
        <end position="1309"/>
    </location>
</feature>
<feature type="domain" description="Carrier 1" evidence="2 9">
    <location>
        <begin position="2507"/>
        <end position="2587"/>
    </location>
</feature>
<feature type="domain" description="Carrier 2" evidence="2 9">
    <location>
        <begin position="3680"/>
        <end position="3759"/>
    </location>
</feature>
<feature type="region of interest" description="Malonyl-CoA:ACP transacylase (MAT) domain" evidence="1 9">
    <location>
        <begin position="590"/>
        <end position="921"/>
    </location>
</feature>
<feature type="region of interest" description="Dehydratase (DH) domain" evidence="1 9">
    <location>
        <begin position="990"/>
        <end position="1306"/>
    </location>
</feature>
<feature type="region of interest" description="N-terminal hotdog fold" evidence="4">
    <location>
        <begin position="990"/>
        <end position="1133"/>
    </location>
</feature>
<feature type="region of interest" description="C-terminal hotdog fold" evidence="4">
    <location>
        <begin position="1157"/>
        <end position="1309"/>
    </location>
</feature>
<feature type="region of interest" description="Methyltransferase (MT) domain" evidence="1 9">
    <location>
        <begin position="1456"/>
        <end position="1650"/>
    </location>
</feature>
<feature type="region of interest" description="Ketoreductase (KR) domain" evidence="1 9">
    <location>
        <begin position="2205"/>
        <end position="2379"/>
    </location>
</feature>
<feature type="region of interest" description="Disordered" evidence="5">
    <location>
        <begin position="2587"/>
        <end position="2683"/>
    </location>
</feature>
<feature type="region of interest" description="Condensation (C) domain" evidence="1 9">
    <location>
        <begin position="2701"/>
        <end position="3128"/>
    </location>
</feature>
<feature type="region of interest" description="Adenylation (A) (KR) domain" evidence="1 9">
    <location>
        <begin position="3162"/>
        <end position="3564"/>
    </location>
</feature>
<feature type="region of interest" description="Reductase (RED) domain" evidence="1 9">
    <location>
        <begin position="3813"/>
        <end position="4045"/>
    </location>
</feature>
<feature type="compositionally biased region" description="Basic and acidic residues" evidence="5">
    <location>
        <begin position="2610"/>
        <end position="2621"/>
    </location>
</feature>
<feature type="compositionally biased region" description="Polar residues" evidence="5">
    <location>
        <begin position="2622"/>
        <end position="2643"/>
    </location>
</feature>
<feature type="compositionally biased region" description="Low complexity" evidence="5">
    <location>
        <begin position="2647"/>
        <end position="2659"/>
    </location>
</feature>
<feature type="compositionally biased region" description="Polar residues" evidence="5">
    <location>
        <begin position="2664"/>
        <end position="2675"/>
    </location>
</feature>
<feature type="active site" description="For beta-ketoacyl synthase activity" evidence="3">
    <location>
        <position position="189"/>
    </location>
</feature>
<feature type="active site" description="For beta-ketoacyl synthase activity" evidence="3">
    <location>
        <position position="328"/>
    </location>
</feature>
<feature type="active site" description="For beta-ketoacyl synthase activity" evidence="3">
    <location>
        <position position="375"/>
    </location>
</feature>
<feature type="active site" description="Proton acceptor; for dehydratase activity" evidence="4">
    <location>
        <position position="1022"/>
    </location>
</feature>
<feature type="active site" description="Proton donor; for dehydratase activity" evidence="4">
    <location>
        <position position="1216"/>
    </location>
</feature>
<feature type="modified residue" description="O-(pantetheine 4'-phosphoryl)serine" evidence="2">
    <location>
        <position position="2547"/>
    </location>
</feature>
<feature type="modified residue" description="O-(pantetheine 4'-phosphoryl)serine" evidence="2">
    <location>
        <position position="3719"/>
    </location>
</feature>
<reference key="1">
    <citation type="journal article" date="2015" name="Fungal Genet. Biol.">
        <title>Structure and biosynthesis of fumosorinone, a new protein tyrosine phosphatase 1B inhibitor firstly isolated from the entomogenous fungus Isaria fumosorosea.</title>
        <authorList>
            <person name="Liu L."/>
            <person name="Zhang J."/>
            <person name="Chen C."/>
            <person name="Teng J."/>
            <person name="Wang C."/>
            <person name="Luo D."/>
        </authorList>
    </citation>
    <scope>NUCLEOTIDE SEQUENCE [GENOMIC DNA]</scope>
    <scope>FUNCTION</scope>
    <scope>DISRUPTION PHENOTYPE</scope>
    <scope>DOMAIN</scope>
    <scope>PATHWAY</scope>
    <source>
        <strain>ARSEF 2679</strain>
    </source>
</reference>
<reference key="2">
    <citation type="journal article" date="2016" name="Genome Biol. Evol.">
        <title>Divergent and convergent evolution of fungal pathogenicity.</title>
        <authorList>
            <person name="Shang Y."/>
            <person name="Xiao G."/>
            <person name="Zheng P."/>
            <person name="Cen K."/>
            <person name="Zhan S."/>
            <person name="Wang C."/>
        </authorList>
    </citation>
    <scope>NUCLEOTIDE SEQUENCE [LARGE SCALE GENOMIC DNA]</scope>
    <source>
        <strain>ARSEF 2679</strain>
    </source>
</reference>
<evidence type="ECO:0000255" key="1"/>
<evidence type="ECO:0000255" key="2">
    <source>
        <dbReference type="PROSITE-ProRule" id="PRU00258"/>
    </source>
</evidence>
<evidence type="ECO:0000255" key="3">
    <source>
        <dbReference type="PROSITE-ProRule" id="PRU01348"/>
    </source>
</evidence>
<evidence type="ECO:0000255" key="4">
    <source>
        <dbReference type="PROSITE-ProRule" id="PRU01363"/>
    </source>
</evidence>
<evidence type="ECO:0000256" key="5">
    <source>
        <dbReference type="SAM" id="MobiDB-lite"/>
    </source>
</evidence>
<evidence type="ECO:0000269" key="6">
    <source>
    </source>
</evidence>
<evidence type="ECO:0000303" key="7">
    <source>
    </source>
</evidence>
<evidence type="ECO:0000305" key="8"/>
<evidence type="ECO:0000305" key="9">
    <source>
    </source>
</evidence>
<gene>
    <name evidence="7" type="primary">fumoS</name>
    <name type="ORF">ISF_08690</name>
</gene>
<organism>
    <name type="scientific">Cordyceps fumosorosea (strain ARSEF 2679)</name>
    <name type="common">Isaria fumosorosea</name>
    <dbReference type="NCBI Taxonomy" id="1081104"/>
    <lineage>
        <taxon>Eukaryota</taxon>
        <taxon>Fungi</taxon>
        <taxon>Dikarya</taxon>
        <taxon>Ascomycota</taxon>
        <taxon>Pezizomycotina</taxon>
        <taxon>Sordariomycetes</taxon>
        <taxon>Hypocreomycetidae</taxon>
        <taxon>Hypocreales</taxon>
        <taxon>Cordycipitaceae</taxon>
        <taxon>Cordyceps</taxon>
    </lineage>
</organism>
<comment type="function">
    <text evidence="6 8 9">Hybrid PKS-NRPS synthetase; part of the gene cluster that mediates the biosynthesis of fumosorinone, a 2-pyridone alkaloid that acts as an inhibitor of protein tyrosine phosphatase 1B which is implicated asa negative regulator of insulin receptor signaling and a potential drug target for the treatment of type II diabetes and other associated metabolic syndromes (PubMed:25857260). The polyketide-amino acid backbone of fumosorinone is first assembled by the PKS-NRPS hybrid fumoS (PubMed:25857260). The PKS modules condense one acetyl-CoA starter unit with 7 malonyl-CoA units, programmed C-methylations occurring after the first 3 and the sixth extensions, and cycles of full reduction occurring after the first 2 extensions (Probable). Because fumoS lacks a designated enoyl reductase (ER) domain, the required activity is provided the enoyl reductase fumoC (Probable). Upon formation of the polyketide backbone on the thiotemplate, the polyketide is transferred to the NRPS module and linked to tyrosine to produce the acyltetramic acid intermediate called prefumosorinone A (Probable). The cytochrome P450 monooxygenase fumoA then probably catalyzes an unprecedented oxidative ring expansion of prefumosorinone A to form prefumosorinone B which contains the 2-pyridone core of fumosorinone (Probable). The cytochrome P450 monooxygenase fumoB might hydroxylate the nitrogen of prefumosorinone B, but not the acyltetramic acid prefumosorinone A, to form fumosorinone (Probable).</text>
</comment>
<comment type="domain">
    <text evidence="9">FumoS has the following domain architecture: KS-MAT-DH-MT-KR-ACP-C-A-T-R. The PKS module (domains KS to ACP) is responsible for the biosynthesis of the polyketide chain and catalyzes three Claisen condensations, as well as beta-keto processing and methylation. The downstream NRPS module contains the condensation (C), adenylation (A), and thiolation (T) domains and catalyzes the formation of the L-tyrosinyl-thioester and the amide linkage between L-tyrosinyl-thioester and the polyketide. The bimodular assembly line is terminated with a putative reductase (RED) domain that facilitates formation and release of the tetramic acid product.</text>
</comment>
<comment type="disruption phenotype">
    <text evidence="6">Impairs the production of fumosorinone (PubMed:25857260). Leads to more developed aerial mycelia but does not affect insect pathogenesis (PubMed:25857260).</text>
</comment>
<comment type="similarity">
    <text evidence="8">In the C-terminal section; belongs to the NRP synthetase family.</text>
</comment>
<dbReference type="EC" id="2.3.1.-" evidence="9"/>
<dbReference type="EC" id="6.3.2.-" evidence="9"/>
<dbReference type="EMBL" id="KP737857">
    <property type="protein sequence ID" value="AKC54422.1"/>
    <property type="molecule type" value="Genomic_DNA"/>
</dbReference>
<dbReference type="EMBL" id="AZHB01000034">
    <property type="protein sequence ID" value="OAA53529.1"/>
    <property type="molecule type" value="Genomic_DNA"/>
</dbReference>
<dbReference type="RefSeq" id="XP_018700480.1">
    <property type="nucleotide sequence ID" value="XM_018852293.1"/>
</dbReference>
<dbReference type="SMR" id="A0A167LUQ4"/>
<dbReference type="STRING" id="1081104.A0A167LUQ4"/>
<dbReference type="GeneID" id="30024982"/>
<dbReference type="OrthoDB" id="416786at2759"/>
<dbReference type="Proteomes" id="UP000076744">
    <property type="component" value="Unassembled WGS sequence"/>
</dbReference>
<dbReference type="GO" id="GO:0004312">
    <property type="term" value="F:fatty acid synthase activity"/>
    <property type="evidence" value="ECO:0007669"/>
    <property type="project" value="TreeGrafter"/>
</dbReference>
<dbReference type="GO" id="GO:0016874">
    <property type="term" value="F:ligase activity"/>
    <property type="evidence" value="ECO:0007669"/>
    <property type="project" value="UniProtKB-KW"/>
</dbReference>
<dbReference type="GO" id="GO:0008168">
    <property type="term" value="F:methyltransferase activity"/>
    <property type="evidence" value="ECO:0007669"/>
    <property type="project" value="UniProtKB-KW"/>
</dbReference>
<dbReference type="GO" id="GO:0016491">
    <property type="term" value="F:oxidoreductase activity"/>
    <property type="evidence" value="ECO:0007669"/>
    <property type="project" value="UniProtKB-KW"/>
</dbReference>
<dbReference type="GO" id="GO:0031177">
    <property type="term" value="F:phosphopantetheine binding"/>
    <property type="evidence" value="ECO:0007669"/>
    <property type="project" value="InterPro"/>
</dbReference>
<dbReference type="GO" id="GO:0006633">
    <property type="term" value="P:fatty acid biosynthetic process"/>
    <property type="evidence" value="ECO:0007669"/>
    <property type="project" value="TreeGrafter"/>
</dbReference>
<dbReference type="GO" id="GO:0032259">
    <property type="term" value="P:methylation"/>
    <property type="evidence" value="ECO:0007669"/>
    <property type="project" value="UniProtKB-KW"/>
</dbReference>
<dbReference type="GO" id="GO:0009403">
    <property type="term" value="P:toxin biosynthetic process"/>
    <property type="evidence" value="ECO:0007669"/>
    <property type="project" value="UniProtKB-ARBA"/>
</dbReference>
<dbReference type="CDD" id="cd05930">
    <property type="entry name" value="A_NRPS"/>
    <property type="match status" value="1"/>
</dbReference>
<dbReference type="CDD" id="cd02440">
    <property type="entry name" value="AdoMet_MTases"/>
    <property type="match status" value="1"/>
</dbReference>
<dbReference type="CDD" id="cd19532">
    <property type="entry name" value="C_PKS-NRPS"/>
    <property type="match status" value="1"/>
</dbReference>
<dbReference type="CDD" id="cd00833">
    <property type="entry name" value="PKS"/>
    <property type="match status" value="1"/>
</dbReference>
<dbReference type="Gene3D" id="3.30.300.30">
    <property type="match status" value="1"/>
</dbReference>
<dbReference type="Gene3D" id="3.30.70.3290">
    <property type="match status" value="1"/>
</dbReference>
<dbReference type="Gene3D" id="3.40.47.10">
    <property type="match status" value="1"/>
</dbReference>
<dbReference type="Gene3D" id="1.10.1200.10">
    <property type="entry name" value="ACP-like"/>
    <property type="match status" value="2"/>
</dbReference>
<dbReference type="Gene3D" id="3.30.559.10">
    <property type="entry name" value="Chloramphenicol acetyltransferase-like domain"/>
    <property type="match status" value="1"/>
</dbReference>
<dbReference type="Gene3D" id="3.40.366.10">
    <property type="entry name" value="Malonyl-Coenzyme A Acyl Carrier Protein, domain 2"/>
    <property type="match status" value="1"/>
</dbReference>
<dbReference type="Gene3D" id="3.40.50.12780">
    <property type="entry name" value="N-terminal domain of ligase-like"/>
    <property type="match status" value="1"/>
</dbReference>
<dbReference type="Gene3D" id="3.40.50.720">
    <property type="entry name" value="NAD(P)-binding Rossmann-like Domain"/>
    <property type="match status" value="2"/>
</dbReference>
<dbReference type="Gene3D" id="3.30.559.30">
    <property type="entry name" value="Nonribosomal peptide synthetase, condensation domain"/>
    <property type="match status" value="1"/>
</dbReference>
<dbReference type="Gene3D" id="3.10.129.110">
    <property type="entry name" value="Polyketide synthase dehydratase"/>
    <property type="match status" value="1"/>
</dbReference>
<dbReference type="Gene3D" id="3.40.50.150">
    <property type="entry name" value="Vaccinia Virus protein VP39"/>
    <property type="match status" value="1"/>
</dbReference>
<dbReference type="InterPro" id="IPR010071">
    <property type="entry name" value="AA_adenyl_dom"/>
</dbReference>
<dbReference type="InterPro" id="IPR001227">
    <property type="entry name" value="Ac_transferase_dom_sf"/>
</dbReference>
<dbReference type="InterPro" id="IPR036736">
    <property type="entry name" value="ACP-like_sf"/>
</dbReference>
<dbReference type="InterPro" id="IPR014043">
    <property type="entry name" value="Acyl_transferase_dom"/>
</dbReference>
<dbReference type="InterPro" id="IPR016035">
    <property type="entry name" value="Acyl_Trfase/lysoPLipase"/>
</dbReference>
<dbReference type="InterPro" id="IPR045851">
    <property type="entry name" value="AMP-bd_C_sf"/>
</dbReference>
<dbReference type="InterPro" id="IPR020845">
    <property type="entry name" value="AMP-binding_CS"/>
</dbReference>
<dbReference type="InterPro" id="IPR000873">
    <property type="entry name" value="AMP-dep_synth/lig_dom"/>
</dbReference>
<dbReference type="InterPro" id="IPR042099">
    <property type="entry name" value="ANL_N_sf"/>
</dbReference>
<dbReference type="InterPro" id="IPR023213">
    <property type="entry name" value="CAT-like_dom_sf"/>
</dbReference>
<dbReference type="InterPro" id="IPR001242">
    <property type="entry name" value="Condensatn"/>
</dbReference>
<dbReference type="InterPro" id="IPR013120">
    <property type="entry name" value="Far_NAD-bd"/>
</dbReference>
<dbReference type="InterPro" id="IPR014031">
    <property type="entry name" value="Ketoacyl_synth_C"/>
</dbReference>
<dbReference type="InterPro" id="IPR014030">
    <property type="entry name" value="Ketoacyl_synth_N"/>
</dbReference>
<dbReference type="InterPro" id="IPR016036">
    <property type="entry name" value="Malonyl_transacylase_ACP-bd"/>
</dbReference>
<dbReference type="InterPro" id="IPR013217">
    <property type="entry name" value="Methyltransf_12"/>
</dbReference>
<dbReference type="InterPro" id="IPR036291">
    <property type="entry name" value="NAD(P)-bd_dom_sf"/>
</dbReference>
<dbReference type="InterPro" id="IPR032821">
    <property type="entry name" value="PKS_assoc"/>
</dbReference>
<dbReference type="InterPro" id="IPR020841">
    <property type="entry name" value="PKS_Beta-ketoAc_synthase_dom"/>
</dbReference>
<dbReference type="InterPro" id="IPR042104">
    <property type="entry name" value="PKS_dehydratase_sf"/>
</dbReference>
<dbReference type="InterPro" id="IPR020807">
    <property type="entry name" value="PKS_DH"/>
</dbReference>
<dbReference type="InterPro" id="IPR049551">
    <property type="entry name" value="PKS_DH_C"/>
</dbReference>
<dbReference type="InterPro" id="IPR049552">
    <property type="entry name" value="PKS_DH_N"/>
</dbReference>
<dbReference type="InterPro" id="IPR013968">
    <property type="entry name" value="PKS_KR"/>
</dbReference>
<dbReference type="InterPro" id="IPR049900">
    <property type="entry name" value="PKS_mFAS_DH"/>
</dbReference>
<dbReference type="InterPro" id="IPR050091">
    <property type="entry name" value="PKS_NRPS_Biosynth_Enz"/>
</dbReference>
<dbReference type="InterPro" id="IPR020806">
    <property type="entry name" value="PKS_PP-bd"/>
</dbReference>
<dbReference type="InterPro" id="IPR009081">
    <property type="entry name" value="PP-bd_ACP"/>
</dbReference>
<dbReference type="InterPro" id="IPR006162">
    <property type="entry name" value="Ppantetheine_attach_site"/>
</dbReference>
<dbReference type="InterPro" id="IPR029063">
    <property type="entry name" value="SAM-dependent_MTases_sf"/>
</dbReference>
<dbReference type="InterPro" id="IPR016039">
    <property type="entry name" value="Thiolase-like"/>
</dbReference>
<dbReference type="NCBIfam" id="TIGR01733">
    <property type="entry name" value="AA-adenyl-dom"/>
    <property type="match status" value="1"/>
</dbReference>
<dbReference type="PANTHER" id="PTHR43775">
    <property type="entry name" value="FATTY ACID SYNTHASE"/>
    <property type="match status" value="1"/>
</dbReference>
<dbReference type="PANTHER" id="PTHR43775:SF20">
    <property type="entry name" value="HYBRID PKS-NRPS SYNTHETASE APDA"/>
    <property type="match status" value="1"/>
</dbReference>
<dbReference type="Pfam" id="PF00698">
    <property type="entry name" value="Acyl_transf_1"/>
    <property type="match status" value="1"/>
</dbReference>
<dbReference type="Pfam" id="PF00501">
    <property type="entry name" value="AMP-binding"/>
    <property type="match status" value="1"/>
</dbReference>
<dbReference type="Pfam" id="PF00668">
    <property type="entry name" value="Condensation"/>
    <property type="match status" value="1"/>
</dbReference>
<dbReference type="Pfam" id="PF16197">
    <property type="entry name" value="KAsynt_C_assoc"/>
    <property type="match status" value="1"/>
</dbReference>
<dbReference type="Pfam" id="PF00109">
    <property type="entry name" value="ketoacyl-synt"/>
    <property type="match status" value="1"/>
</dbReference>
<dbReference type="Pfam" id="PF02801">
    <property type="entry name" value="Ketoacyl-synt_C"/>
    <property type="match status" value="1"/>
</dbReference>
<dbReference type="Pfam" id="PF08659">
    <property type="entry name" value="KR"/>
    <property type="match status" value="1"/>
</dbReference>
<dbReference type="Pfam" id="PF08242">
    <property type="entry name" value="Methyltransf_12"/>
    <property type="match status" value="1"/>
</dbReference>
<dbReference type="Pfam" id="PF07993">
    <property type="entry name" value="NAD_binding_4"/>
    <property type="match status" value="1"/>
</dbReference>
<dbReference type="Pfam" id="PF21089">
    <property type="entry name" value="PKS_DH_N"/>
    <property type="match status" value="1"/>
</dbReference>
<dbReference type="Pfam" id="PF00550">
    <property type="entry name" value="PP-binding"/>
    <property type="match status" value="2"/>
</dbReference>
<dbReference type="Pfam" id="PF14765">
    <property type="entry name" value="PS-DH"/>
    <property type="match status" value="1"/>
</dbReference>
<dbReference type="SMART" id="SM00827">
    <property type="entry name" value="PKS_AT"/>
    <property type="match status" value="1"/>
</dbReference>
<dbReference type="SMART" id="SM00826">
    <property type="entry name" value="PKS_DH"/>
    <property type="match status" value="1"/>
</dbReference>
<dbReference type="SMART" id="SM00822">
    <property type="entry name" value="PKS_KR"/>
    <property type="match status" value="1"/>
</dbReference>
<dbReference type="SMART" id="SM00825">
    <property type="entry name" value="PKS_KS"/>
    <property type="match status" value="1"/>
</dbReference>
<dbReference type="SMART" id="SM00823">
    <property type="entry name" value="PKS_PP"/>
    <property type="match status" value="2"/>
</dbReference>
<dbReference type="SUPFAM" id="SSF56801">
    <property type="entry name" value="Acetyl-CoA synthetase-like"/>
    <property type="match status" value="1"/>
</dbReference>
<dbReference type="SUPFAM" id="SSF47336">
    <property type="entry name" value="ACP-like"/>
    <property type="match status" value="2"/>
</dbReference>
<dbReference type="SUPFAM" id="SSF52777">
    <property type="entry name" value="CoA-dependent acyltransferases"/>
    <property type="match status" value="2"/>
</dbReference>
<dbReference type="SUPFAM" id="SSF52151">
    <property type="entry name" value="FabD/lysophospholipase-like"/>
    <property type="match status" value="1"/>
</dbReference>
<dbReference type="SUPFAM" id="SSF51735">
    <property type="entry name" value="NAD(P)-binding Rossmann-fold domains"/>
    <property type="match status" value="2"/>
</dbReference>
<dbReference type="SUPFAM" id="SSF55048">
    <property type="entry name" value="Probable ACP-binding domain of malonyl-CoA ACP transacylase"/>
    <property type="match status" value="1"/>
</dbReference>
<dbReference type="SUPFAM" id="SSF53335">
    <property type="entry name" value="S-adenosyl-L-methionine-dependent methyltransferases"/>
    <property type="match status" value="1"/>
</dbReference>
<dbReference type="SUPFAM" id="SSF53901">
    <property type="entry name" value="Thiolase-like"/>
    <property type="match status" value="1"/>
</dbReference>
<dbReference type="PROSITE" id="PS00455">
    <property type="entry name" value="AMP_BINDING"/>
    <property type="match status" value="1"/>
</dbReference>
<dbReference type="PROSITE" id="PS50075">
    <property type="entry name" value="CARRIER"/>
    <property type="match status" value="2"/>
</dbReference>
<dbReference type="PROSITE" id="PS52004">
    <property type="entry name" value="KS3_2"/>
    <property type="match status" value="1"/>
</dbReference>
<dbReference type="PROSITE" id="PS00012">
    <property type="entry name" value="PHOSPHOPANTETHEINE"/>
    <property type="match status" value="1"/>
</dbReference>
<dbReference type="PROSITE" id="PS52019">
    <property type="entry name" value="PKS_MFAS_DH"/>
    <property type="match status" value="1"/>
</dbReference>
<keyword id="KW-0436">Ligase</keyword>
<keyword id="KW-0489">Methyltransferase</keyword>
<keyword id="KW-0511">Multifunctional enzyme</keyword>
<keyword id="KW-0560">Oxidoreductase</keyword>
<keyword id="KW-0596">Phosphopantetheine</keyword>
<keyword id="KW-0597">Phosphoprotein</keyword>
<keyword id="KW-1185">Reference proteome</keyword>
<keyword id="KW-0677">Repeat</keyword>
<keyword id="KW-0808">Transferase</keyword>
<name>FUMOS_CORFA</name>